<proteinExistence type="evidence at protein level"/>
<gene>
    <name evidence="1" type="primary">thiC</name>
    <name type="ordered locus">Rv0423c</name>
    <name type="ORF">MTCY22G10.20c</name>
</gene>
<accession>P9WG79</accession>
<accession>L0T5B7</accession>
<accession>P66911</accession>
<accession>P96269</accession>
<reference key="1">
    <citation type="journal article" date="1998" name="Nature">
        <title>Deciphering the biology of Mycobacterium tuberculosis from the complete genome sequence.</title>
        <authorList>
            <person name="Cole S.T."/>
            <person name="Brosch R."/>
            <person name="Parkhill J."/>
            <person name="Garnier T."/>
            <person name="Churcher C.M."/>
            <person name="Harris D.E."/>
            <person name="Gordon S.V."/>
            <person name="Eiglmeier K."/>
            <person name="Gas S."/>
            <person name="Barry C.E. III"/>
            <person name="Tekaia F."/>
            <person name="Badcock K."/>
            <person name="Basham D."/>
            <person name="Brown D."/>
            <person name="Chillingworth T."/>
            <person name="Connor R."/>
            <person name="Davies R.M."/>
            <person name="Devlin K."/>
            <person name="Feltwell T."/>
            <person name="Gentles S."/>
            <person name="Hamlin N."/>
            <person name="Holroyd S."/>
            <person name="Hornsby T."/>
            <person name="Jagels K."/>
            <person name="Krogh A."/>
            <person name="McLean J."/>
            <person name="Moule S."/>
            <person name="Murphy L.D."/>
            <person name="Oliver S."/>
            <person name="Osborne J."/>
            <person name="Quail M.A."/>
            <person name="Rajandream M.A."/>
            <person name="Rogers J."/>
            <person name="Rutter S."/>
            <person name="Seeger K."/>
            <person name="Skelton S."/>
            <person name="Squares S."/>
            <person name="Squares R."/>
            <person name="Sulston J.E."/>
            <person name="Taylor K."/>
            <person name="Whitehead S."/>
            <person name="Barrell B.G."/>
        </authorList>
    </citation>
    <scope>NUCLEOTIDE SEQUENCE [LARGE SCALE GENOMIC DNA]</scope>
    <source>
        <strain>ATCC 25618 / H37Rv</strain>
    </source>
</reference>
<reference key="2">
    <citation type="journal article" date="2011" name="Mol. Cell. Proteomics">
        <title>Proteogenomic analysis of Mycobacterium tuberculosis by high resolution mass spectrometry.</title>
        <authorList>
            <person name="Kelkar D.S."/>
            <person name="Kumar D."/>
            <person name="Kumar P."/>
            <person name="Balakrishnan L."/>
            <person name="Muthusamy B."/>
            <person name="Yadav A.K."/>
            <person name="Shrivastava P."/>
            <person name="Marimuthu A."/>
            <person name="Anand S."/>
            <person name="Sundaram H."/>
            <person name="Kingsbury R."/>
            <person name="Harsha H.C."/>
            <person name="Nair B."/>
            <person name="Prasad T.S."/>
            <person name="Chauhan D.S."/>
            <person name="Katoch K."/>
            <person name="Katoch V.M."/>
            <person name="Kumar P."/>
            <person name="Chaerkady R."/>
            <person name="Ramachandran S."/>
            <person name="Dash D."/>
            <person name="Pandey A."/>
        </authorList>
    </citation>
    <scope>IDENTIFICATION BY MASS SPECTROMETRY [LARGE SCALE ANALYSIS]</scope>
    <source>
        <strain>ATCC 25618 / H37Rv</strain>
    </source>
</reference>
<name>THIC_MYCTU</name>
<comment type="function">
    <text evidence="1">Catalyzes the synthesis of the hydroxymethylpyrimidine phosphate (HMP-P) moiety of thiamine from aminoimidazole ribotide (AIR) in a radical S-adenosyl-L-methionine (SAM)-dependent reaction.</text>
</comment>
<comment type="catalytic activity">
    <reaction evidence="1">
        <text>5-amino-1-(5-phospho-beta-D-ribosyl)imidazole + S-adenosyl-L-methionine = 4-amino-2-methyl-5-(phosphooxymethyl)pyrimidine + CO + 5'-deoxyadenosine + formate + L-methionine + 3 H(+)</text>
        <dbReference type="Rhea" id="RHEA:24840"/>
        <dbReference type="ChEBI" id="CHEBI:15378"/>
        <dbReference type="ChEBI" id="CHEBI:15740"/>
        <dbReference type="ChEBI" id="CHEBI:17245"/>
        <dbReference type="ChEBI" id="CHEBI:17319"/>
        <dbReference type="ChEBI" id="CHEBI:57844"/>
        <dbReference type="ChEBI" id="CHEBI:58354"/>
        <dbReference type="ChEBI" id="CHEBI:59789"/>
        <dbReference type="ChEBI" id="CHEBI:137981"/>
        <dbReference type="EC" id="4.1.99.17"/>
    </reaction>
</comment>
<comment type="cofactor">
    <cofactor evidence="1">
        <name>[4Fe-4S] cluster</name>
        <dbReference type="ChEBI" id="CHEBI:49883"/>
    </cofactor>
    <text evidence="1">Binds 1 [4Fe-4S] cluster per subunit. The cluster is coordinated with 3 cysteines and an exchangeable S-adenosyl-L-methionine.</text>
</comment>
<comment type="pathway">
    <text evidence="1">Cofactor biosynthesis; thiamine diphosphate biosynthesis.</text>
</comment>
<comment type="similarity">
    <text evidence="1">Belongs to the ThiC family.</text>
</comment>
<protein>
    <recommendedName>
        <fullName evidence="1">Phosphomethylpyrimidine synthase</fullName>
        <ecNumber evidence="1">4.1.99.17</ecNumber>
    </recommendedName>
    <alternativeName>
        <fullName evidence="1">Hydroxymethylpyrimidine phosphate synthase</fullName>
        <shortName evidence="1">HMP-P synthase</shortName>
        <shortName evidence="1">HMP-phosphate synthase</shortName>
        <shortName evidence="1">HMPP synthase</shortName>
    </alternativeName>
    <alternativeName>
        <fullName evidence="1">Thiamine biosynthesis protein ThiC</fullName>
    </alternativeName>
</protein>
<evidence type="ECO:0000255" key="1">
    <source>
        <dbReference type="HAMAP-Rule" id="MF_00089"/>
    </source>
</evidence>
<organism>
    <name type="scientific">Mycobacterium tuberculosis (strain ATCC 25618 / H37Rv)</name>
    <dbReference type="NCBI Taxonomy" id="83332"/>
    <lineage>
        <taxon>Bacteria</taxon>
        <taxon>Bacillati</taxon>
        <taxon>Actinomycetota</taxon>
        <taxon>Actinomycetes</taxon>
        <taxon>Mycobacteriales</taxon>
        <taxon>Mycobacteriaceae</taxon>
        <taxon>Mycobacterium</taxon>
        <taxon>Mycobacterium tuberculosis complex</taxon>
    </lineage>
</organism>
<feature type="chain" id="PRO_0000152815" description="Phosphomethylpyrimidine synthase">
    <location>
        <begin position="1"/>
        <end position="547"/>
    </location>
</feature>
<feature type="binding site" evidence="1">
    <location>
        <position position="146"/>
    </location>
    <ligand>
        <name>substrate</name>
    </ligand>
</feature>
<feature type="binding site" evidence="1">
    <location>
        <position position="175"/>
    </location>
    <ligand>
        <name>substrate</name>
    </ligand>
</feature>
<feature type="binding site" evidence="1">
    <location>
        <position position="204"/>
    </location>
    <ligand>
        <name>substrate</name>
    </ligand>
</feature>
<feature type="binding site" evidence="1">
    <location>
        <position position="240"/>
    </location>
    <ligand>
        <name>substrate</name>
    </ligand>
</feature>
<feature type="binding site" evidence="1">
    <location>
        <begin position="260"/>
        <end position="262"/>
    </location>
    <ligand>
        <name>substrate</name>
    </ligand>
</feature>
<feature type="binding site" evidence="1">
    <location>
        <begin position="301"/>
        <end position="304"/>
    </location>
    <ligand>
        <name>substrate</name>
    </ligand>
</feature>
<feature type="binding site" evidence="1">
    <location>
        <position position="340"/>
    </location>
    <ligand>
        <name>substrate</name>
    </ligand>
</feature>
<feature type="binding site" evidence="1">
    <location>
        <position position="344"/>
    </location>
    <ligand>
        <name>Zn(2+)</name>
        <dbReference type="ChEBI" id="CHEBI:29105"/>
    </ligand>
</feature>
<feature type="binding site" evidence="1">
    <location>
        <position position="367"/>
    </location>
    <ligand>
        <name>substrate</name>
    </ligand>
</feature>
<feature type="binding site" evidence="1">
    <location>
        <position position="408"/>
    </location>
    <ligand>
        <name>Zn(2+)</name>
        <dbReference type="ChEBI" id="CHEBI:29105"/>
    </ligand>
</feature>
<feature type="binding site" evidence="1">
    <location>
        <position position="488"/>
    </location>
    <ligand>
        <name>[4Fe-4S] cluster</name>
        <dbReference type="ChEBI" id="CHEBI:49883"/>
        <note>4Fe-4S-S-AdoMet</note>
    </ligand>
</feature>
<feature type="binding site" evidence="1">
    <location>
        <position position="491"/>
    </location>
    <ligand>
        <name>[4Fe-4S] cluster</name>
        <dbReference type="ChEBI" id="CHEBI:49883"/>
        <note>4Fe-4S-S-AdoMet</note>
    </ligand>
</feature>
<feature type="binding site" evidence="1">
    <location>
        <position position="496"/>
    </location>
    <ligand>
        <name>[4Fe-4S] cluster</name>
        <dbReference type="ChEBI" id="CHEBI:49883"/>
        <note>4Fe-4S-S-AdoMet</note>
    </ligand>
</feature>
<dbReference type="EC" id="4.1.99.17" evidence="1"/>
<dbReference type="EMBL" id="AL123456">
    <property type="protein sequence ID" value="CCP43154.1"/>
    <property type="molecule type" value="Genomic_DNA"/>
</dbReference>
<dbReference type="PIR" id="E70630">
    <property type="entry name" value="E70630"/>
</dbReference>
<dbReference type="RefSeq" id="NP_214937.1">
    <property type="nucleotide sequence ID" value="NC_000962.3"/>
</dbReference>
<dbReference type="RefSeq" id="WP_003900143.1">
    <property type="nucleotide sequence ID" value="NZ_NVQJ01000002.1"/>
</dbReference>
<dbReference type="SMR" id="P9WG79"/>
<dbReference type="FunCoup" id="P9WG79">
    <property type="interactions" value="270"/>
</dbReference>
<dbReference type="STRING" id="83332.Rv0423c"/>
<dbReference type="PaxDb" id="83332-Rv0423c"/>
<dbReference type="DNASU" id="886379"/>
<dbReference type="GeneID" id="886379"/>
<dbReference type="KEGG" id="mtu:Rv0423c"/>
<dbReference type="KEGG" id="mtv:RVBD_0423c"/>
<dbReference type="TubercuList" id="Rv0423c"/>
<dbReference type="eggNOG" id="COG0422">
    <property type="taxonomic scope" value="Bacteria"/>
</dbReference>
<dbReference type="InParanoid" id="P9WG79"/>
<dbReference type="OrthoDB" id="9805897at2"/>
<dbReference type="PhylomeDB" id="P9WG79"/>
<dbReference type="UniPathway" id="UPA00060"/>
<dbReference type="Proteomes" id="UP000001584">
    <property type="component" value="Chromosome"/>
</dbReference>
<dbReference type="GO" id="GO:0005829">
    <property type="term" value="C:cytosol"/>
    <property type="evidence" value="ECO:0007005"/>
    <property type="project" value="MTBBASE"/>
</dbReference>
<dbReference type="GO" id="GO:0005886">
    <property type="term" value="C:plasma membrane"/>
    <property type="evidence" value="ECO:0007005"/>
    <property type="project" value="MTBBASE"/>
</dbReference>
<dbReference type="GO" id="GO:0051539">
    <property type="term" value="F:4 iron, 4 sulfur cluster binding"/>
    <property type="evidence" value="ECO:0007669"/>
    <property type="project" value="UniProtKB-KW"/>
</dbReference>
<dbReference type="GO" id="GO:0016830">
    <property type="term" value="F:carbon-carbon lyase activity"/>
    <property type="evidence" value="ECO:0007669"/>
    <property type="project" value="InterPro"/>
</dbReference>
<dbReference type="GO" id="GO:0008270">
    <property type="term" value="F:zinc ion binding"/>
    <property type="evidence" value="ECO:0007669"/>
    <property type="project" value="UniProtKB-UniRule"/>
</dbReference>
<dbReference type="GO" id="GO:0009228">
    <property type="term" value="P:thiamine biosynthetic process"/>
    <property type="evidence" value="ECO:0000318"/>
    <property type="project" value="GO_Central"/>
</dbReference>
<dbReference type="GO" id="GO:0009229">
    <property type="term" value="P:thiamine diphosphate biosynthetic process"/>
    <property type="evidence" value="ECO:0007669"/>
    <property type="project" value="UniProtKB-UniRule"/>
</dbReference>
<dbReference type="FunFam" id="3.20.20.540:FF:000001">
    <property type="entry name" value="Phosphomethylpyrimidine synthase"/>
    <property type="match status" value="1"/>
</dbReference>
<dbReference type="Gene3D" id="6.10.250.620">
    <property type="match status" value="1"/>
</dbReference>
<dbReference type="Gene3D" id="3.20.20.540">
    <property type="entry name" value="Radical SAM ThiC family, central domain"/>
    <property type="match status" value="1"/>
</dbReference>
<dbReference type="HAMAP" id="MF_00089">
    <property type="entry name" value="ThiC"/>
    <property type="match status" value="1"/>
</dbReference>
<dbReference type="InterPro" id="IPR037509">
    <property type="entry name" value="ThiC"/>
</dbReference>
<dbReference type="InterPro" id="IPR025747">
    <property type="entry name" value="ThiC-associated_dom"/>
</dbReference>
<dbReference type="InterPro" id="IPR038521">
    <property type="entry name" value="ThiC/Bza_core_dom"/>
</dbReference>
<dbReference type="InterPro" id="IPR002817">
    <property type="entry name" value="ThiC/BzaA/B"/>
</dbReference>
<dbReference type="NCBIfam" id="NF006763">
    <property type="entry name" value="PRK09284.1"/>
    <property type="match status" value="1"/>
</dbReference>
<dbReference type="NCBIfam" id="NF009895">
    <property type="entry name" value="PRK13352.1"/>
    <property type="match status" value="1"/>
</dbReference>
<dbReference type="NCBIfam" id="TIGR00190">
    <property type="entry name" value="thiC"/>
    <property type="match status" value="1"/>
</dbReference>
<dbReference type="PANTHER" id="PTHR30557:SF1">
    <property type="entry name" value="PHOSPHOMETHYLPYRIMIDINE SYNTHASE, CHLOROPLASTIC"/>
    <property type="match status" value="1"/>
</dbReference>
<dbReference type="PANTHER" id="PTHR30557">
    <property type="entry name" value="THIAMINE BIOSYNTHESIS PROTEIN THIC"/>
    <property type="match status" value="1"/>
</dbReference>
<dbReference type="Pfam" id="PF13667">
    <property type="entry name" value="ThiC-associated"/>
    <property type="match status" value="1"/>
</dbReference>
<dbReference type="Pfam" id="PF01964">
    <property type="entry name" value="ThiC_Rad_SAM"/>
    <property type="match status" value="1"/>
</dbReference>
<dbReference type="SFLD" id="SFLDF00407">
    <property type="entry name" value="phosphomethylpyrimidine_syntha"/>
    <property type="match status" value="1"/>
</dbReference>
<dbReference type="SFLD" id="SFLDG01114">
    <property type="entry name" value="phosphomethylpyrimidine_syntha"/>
    <property type="match status" value="1"/>
</dbReference>
<dbReference type="SFLD" id="SFLDS00113">
    <property type="entry name" value="Radical_SAM_Phosphomethylpyrim"/>
    <property type="match status" value="1"/>
</dbReference>
<sequence>MTITVEPSVTTGPIAGSAKAYREIEAPGSGATLQVPFRRVHLSTGDHFDLYDTSGPYTDTDTVIDLTAGLPHRPGVVRDRGTQLQRARAGEITAEMAFIAAREDMSAELVRDEVARGRAVIPANHHHPESEPMIIGKAFAVKVNANIGNSAVTSSIAEEVDKMVWATRWGADTIMDLSTGKNIHETREWILRNSPVPVGTVPIYQALEKVKGDPTELTWEIYRDTVIEQCEQGVDYMTVHAGVLLRYVPLTAKRVTGIVSRGGSIMAAWCLAHHRESFLYTNFEELCDIFARYDVTFSLGDGLRPGSIADANDAAQFAELRTLGELTKIAKAHGAQVMIEGPGHIPMHKIVENVRLEEELCEEAPFYTLGPLATDIAPAYDHITSAIGAAIIAQAGTAMLCYVTPKEHLGLPDRKDVKDGVIAYKIAAHAADLAKGHPRAQERDDALSTARFEFRWNDQFALSLDPDTAREFHDETLPAEPAKTAHFCSMCGPKFCSMRITQDVREYAAEHGLETEADIEAVLAAGMAEKSREFAEHGNRVYLPITQ</sequence>
<keyword id="KW-0004">4Fe-4S</keyword>
<keyword id="KW-0408">Iron</keyword>
<keyword id="KW-0411">Iron-sulfur</keyword>
<keyword id="KW-0456">Lyase</keyword>
<keyword id="KW-0479">Metal-binding</keyword>
<keyword id="KW-1185">Reference proteome</keyword>
<keyword id="KW-0949">S-adenosyl-L-methionine</keyword>
<keyword id="KW-0784">Thiamine biosynthesis</keyword>
<keyword id="KW-0862">Zinc</keyword>